<name>FEOA_METJA</name>
<accession>Q57987</accession>
<proteinExistence type="inferred from homology"/>
<sequence>MYPLAFAKEGEEVIVKKIDAGCGAMQRLVSMGINIGSKLKVIRNQNGPVIISTKGSNIAIGRGLAMKIMVEDAEYGGENEKL</sequence>
<comment type="function">
    <text evidence="1">Might be involved in Fe(2+) ion uptake (By similarity).</text>
</comment>
<comment type="similarity">
    <text evidence="2">Belongs to the FeoA family.</text>
</comment>
<keyword id="KW-0406">Ion transport</keyword>
<keyword id="KW-0408">Iron</keyword>
<keyword id="KW-0410">Iron transport</keyword>
<keyword id="KW-1185">Reference proteome</keyword>
<keyword id="KW-0813">Transport</keyword>
<dbReference type="EMBL" id="L77117">
    <property type="protein sequence ID" value="AAB98558.1"/>
    <property type="molecule type" value="Genomic_DNA"/>
</dbReference>
<dbReference type="PIR" id="G64370">
    <property type="entry name" value="G64370"/>
</dbReference>
<dbReference type="RefSeq" id="WP_010870071.1">
    <property type="nucleotide sequence ID" value="NC_000909.1"/>
</dbReference>
<dbReference type="SMR" id="Q57987"/>
<dbReference type="FunCoup" id="Q57987">
    <property type="interactions" value="1"/>
</dbReference>
<dbReference type="STRING" id="243232.MJ_0567"/>
<dbReference type="PaxDb" id="243232-MJ_0567"/>
<dbReference type="EnsemblBacteria" id="AAB98558">
    <property type="protein sequence ID" value="AAB98558"/>
    <property type="gene ID" value="MJ_0567"/>
</dbReference>
<dbReference type="GeneID" id="1451432"/>
<dbReference type="KEGG" id="mja:MJ_0567"/>
<dbReference type="eggNOG" id="arCOG02102">
    <property type="taxonomic scope" value="Archaea"/>
</dbReference>
<dbReference type="HOGENOM" id="CLU_150646_6_3_2"/>
<dbReference type="InParanoid" id="Q57987"/>
<dbReference type="OrthoDB" id="105333at2157"/>
<dbReference type="PhylomeDB" id="Q57987"/>
<dbReference type="Proteomes" id="UP000000805">
    <property type="component" value="Chromosome"/>
</dbReference>
<dbReference type="GO" id="GO:0046914">
    <property type="term" value="F:transition metal ion binding"/>
    <property type="evidence" value="ECO:0007669"/>
    <property type="project" value="InterPro"/>
</dbReference>
<dbReference type="GO" id="GO:0006826">
    <property type="term" value="P:iron ion transport"/>
    <property type="evidence" value="ECO:0007669"/>
    <property type="project" value="UniProtKB-KW"/>
</dbReference>
<dbReference type="Gene3D" id="2.30.30.90">
    <property type="match status" value="1"/>
</dbReference>
<dbReference type="InterPro" id="IPR007167">
    <property type="entry name" value="Fe-transptr_FeoA-like"/>
</dbReference>
<dbReference type="InterPro" id="IPR053184">
    <property type="entry name" value="FeoA-like"/>
</dbReference>
<dbReference type="InterPro" id="IPR038157">
    <property type="entry name" value="FeoA_core_dom"/>
</dbReference>
<dbReference type="InterPro" id="IPR008988">
    <property type="entry name" value="Transcriptional_repressor_C"/>
</dbReference>
<dbReference type="PANTHER" id="PTHR43151:SF2">
    <property type="entry name" value="FE(2+) TRANSPORT PROTEIN A-RELATED"/>
    <property type="match status" value="1"/>
</dbReference>
<dbReference type="PANTHER" id="PTHR43151">
    <property type="entry name" value="FEOA FAMILY PROTEIN"/>
    <property type="match status" value="1"/>
</dbReference>
<dbReference type="Pfam" id="PF04023">
    <property type="entry name" value="FeoA"/>
    <property type="match status" value="1"/>
</dbReference>
<dbReference type="SMART" id="SM00899">
    <property type="entry name" value="FeoA"/>
    <property type="match status" value="1"/>
</dbReference>
<dbReference type="SUPFAM" id="SSF50037">
    <property type="entry name" value="C-terminal domain of transcriptional repressors"/>
    <property type="match status" value="1"/>
</dbReference>
<organism>
    <name type="scientific">Methanocaldococcus jannaschii (strain ATCC 43067 / DSM 2661 / JAL-1 / JCM 10045 / NBRC 100440)</name>
    <name type="common">Methanococcus jannaschii</name>
    <dbReference type="NCBI Taxonomy" id="243232"/>
    <lineage>
        <taxon>Archaea</taxon>
        <taxon>Methanobacteriati</taxon>
        <taxon>Methanobacteriota</taxon>
        <taxon>Methanomada group</taxon>
        <taxon>Methanococci</taxon>
        <taxon>Methanococcales</taxon>
        <taxon>Methanocaldococcaceae</taxon>
        <taxon>Methanocaldococcus</taxon>
    </lineage>
</organism>
<protein>
    <recommendedName>
        <fullName>Putative Fe(2+) transport protein A</fullName>
    </recommendedName>
</protein>
<gene>
    <name type="ordered locus">MJ0567</name>
</gene>
<evidence type="ECO:0000250" key="1">
    <source>
        <dbReference type="UniProtKB" id="P0AEL3"/>
    </source>
</evidence>
<evidence type="ECO:0000305" key="2"/>
<feature type="chain" id="PRO_0000106934" description="Putative Fe(2+) transport protein A">
    <location>
        <begin position="1"/>
        <end position="82"/>
    </location>
</feature>
<reference key="1">
    <citation type="journal article" date="1996" name="Science">
        <title>Complete genome sequence of the methanogenic archaeon, Methanococcus jannaschii.</title>
        <authorList>
            <person name="Bult C.J."/>
            <person name="White O."/>
            <person name="Olsen G.J."/>
            <person name="Zhou L."/>
            <person name="Fleischmann R.D."/>
            <person name="Sutton G.G."/>
            <person name="Blake J.A."/>
            <person name="FitzGerald L.M."/>
            <person name="Clayton R.A."/>
            <person name="Gocayne J.D."/>
            <person name="Kerlavage A.R."/>
            <person name="Dougherty B.A."/>
            <person name="Tomb J.-F."/>
            <person name="Adams M.D."/>
            <person name="Reich C.I."/>
            <person name="Overbeek R."/>
            <person name="Kirkness E.F."/>
            <person name="Weinstock K.G."/>
            <person name="Merrick J.M."/>
            <person name="Glodek A."/>
            <person name="Scott J.L."/>
            <person name="Geoghagen N.S.M."/>
            <person name="Weidman J.F."/>
            <person name="Fuhrmann J.L."/>
            <person name="Nguyen D."/>
            <person name="Utterback T.R."/>
            <person name="Kelley J.M."/>
            <person name="Peterson J.D."/>
            <person name="Sadow P.W."/>
            <person name="Hanna M.C."/>
            <person name="Cotton M.D."/>
            <person name="Roberts K.M."/>
            <person name="Hurst M.A."/>
            <person name="Kaine B.P."/>
            <person name="Borodovsky M."/>
            <person name="Klenk H.-P."/>
            <person name="Fraser C.M."/>
            <person name="Smith H.O."/>
            <person name="Woese C.R."/>
            <person name="Venter J.C."/>
        </authorList>
    </citation>
    <scope>NUCLEOTIDE SEQUENCE [LARGE SCALE GENOMIC DNA]</scope>
    <source>
        <strain>ATCC 43067 / DSM 2661 / JAL-1 / JCM 10045 / NBRC 100440</strain>
    </source>
</reference>